<organism>
    <name type="scientific">Dehalococcoides mccartyi (strain ATCC BAA-2100 / JCM 16839 / KCTC 5957 / BAV1)</name>
    <dbReference type="NCBI Taxonomy" id="216389"/>
    <lineage>
        <taxon>Bacteria</taxon>
        <taxon>Bacillati</taxon>
        <taxon>Chloroflexota</taxon>
        <taxon>Dehalococcoidia</taxon>
        <taxon>Dehalococcoidales</taxon>
        <taxon>Dehalococcoidaceae</taxon>
        <taxon>Dehalococcoides</taxon>
    </lineage>
</organism>
<protein>
    <recommendedName>
        <fullName evidence="1">Arginine--tRNA ligase</fullName>
        <ecNumber evidence="1">6.1.1.19</ecNumber>
    </recommendedName>
    <alternativeName>
        <fullName evidence="1">Arginyl-tRNA synthetase</fullName>
        <shortName evidence="1">ArgRS</shortName>
    </alternativeName>
</protein>
<comment type="catalytic activity">
    <reaction evidence="1">
        <text>tRNA(Arg) + L-arginine + ATP = L-arginyl-tRNA(Arg) + AMP + diphosphate</text>
        <dbReference type="Rhea" id="RHEA:20301"/>
        <dbReference type="Rhea" id="RHEA-COMP:9658"/>
        <dbReference type="Rhea" id="RHEA-COMP:9673"/>
        <dbReference type="ChEBI" id="CHEBI:30616"/>
        <dbReference type="ChEBI" id="CHEBI:32682"/>
        <dbReference type="ChEBI" id="CHEBI:33019"/>
        <dbReference type="ChEBI" id="CHEBI:78442"/>
        <dbReference type="ChEBI" id="CHEBI:78513"/>
        <dbReference type="ChEBI" id="CHEBI:456215"/>
        <dbReference type="EC" id="6.1.1.19"/>
    </reaction>
</comment>
<comment type="subunit">
    <text evidence="1">Monomer.</text>
</comment>
<comment type="subcellular location">
    <subcellularLocation>
        <location evidence="1">Cytoplasm</location>
    </subcellularLocation>
</comment>
<comment type="similarity">
    <text evidence="1">Belongs to the class-I aminoacyl-tRNA synthetase family.</text>
</comment>
<dbReference type="EC" id="6.1.1.19" evidence="1"/>
<dbReference type="EMBL" id="CP000688">
    <property type="protein sequence ID" value="ABQ17661.1"/>
    <property type="molecule type" value="Genomic_DNA"/>
</dbReference>
<dbReference type="SMR" id="A5FQ65"/>
<dbReference type="KEGG" id="deb:DehaBAV1_1081"/>
<dbReference type="PATRIC" id="fig|216389.18.peg.1143"/>
<dbReference type="HOGENOM" id="CLU_006406_0_1_0"/>
<dbReference type="GO" id="GO:0005737">
    <property type="term" value="C:cytoplasm"/>
    <property type="evidence" value="ECO:0007669"/>
    <property type="project" value="UniProtKB-SubCell"/>
</dbReference>
<dbReference type="GO" id="GO:0004814">
    <property type="term" value="F:arginine-tRNA ligase activity"/>
    <property type="evidence" value="ECO:0007669"/>
    <property type="project" value="UniProtKB-UniRule"/>
</dbReference>
<dbReference type="GO" id="GO:0005524">
    <property type="term" value="F:ATP binding"/>
    <property type="evidence" value="ECO:0007669"/>
    <property type="project" value="UniProtKB-UniRule"/>
</dbReference>
<dbReference type="GO" id="GO:0006420">
    <property type="term" value="P:arginyl-tRNA aminoacylation"/>
    <property type="evidence" value="ECO:0007669"/>
    <property type="project" value="UniProtKB-UniRule"/>
</dbReference>
<dbReference type="CDD" id="cd00671">
    <property type="entry name" value="ArgRS_core"/>
    <property type="match status" value="1"/>
</dbReference>
<dbReference type="FunFam" id="1.10.730.10:FF:000008">
    <property type="entry name" value="Arginine--tRNA ligase"/>
    <property type="match status" value="1"/>
</dbReference>
<dbReference type="FunFam" id="3.40.50.620:FF:000062">
    <property type="entry name" value="Arginine--tRNA ligase"/>
    <property type="match status" value="1"/>
</dbReference>
<dbReference type="Gene3D" id="3.30.1360.70">
    <property type="entry name" value="Arginyl tRNA synthetase N-terminal domain"/>
    <property type="match status" value="1"/>
</dbReference>
<dbReference type="Gene3D" id="3.40.50.620">
    <property type="entry name" value="HUPs"/>
    <property type="match status" value="1"/>
</dbReference>
<dbReference type="Gene3D" id="1.10.730.10">
    <property type="entry name" value="Isoleucyl-tRNA Synthetase, Domain 1"/>
    <property type="match status" value="1"/>
</dbReference>
<dbReference type="HAMAP" id="MF_00123">
    <property type="entry name" value="Arg_tRNA_synth"/>
    <property type="match status" value="1"/>
</dbReference>
<dbReference type="InterPro" id="IPR001412">
    <property type="entry name" value="aa-tRNA-synth_I_CS"/>
</dbReference>
<dbReference type="InterPro" id="IPR001278">
    <property type="entry name" value="Arg-tRNA-ligase"/>
</dbReference>
<dbReference type="InterPro" id="IPR005148">
    <property type="entry name" value="Arg-tRNA-synth_N"/>
</dbReference>
<dbReference type="InterPro" id="IPR036695">
    <property type="entry name" value="Arg-tRNA-synth_N_sf"/>
</dbReference>
<dbReference type="InterPro" id="IPR035684">
    <property type="entry name" value="ArgRS_core"/>
</dbReference>
<dbReference type="InterPro" id="IPR008909">
    <property type="entry name" value="DALR_anticod-bd"/>
</dbReference>
<dbReference type="InterPro" id="IPR014729">
    <property type="entry name" value="Rossmann-like_a/b/a_fold"/>
</dbReference>
<dbReference type="InterPro" id="IPR009080">
    <property type="entry name" value="tRNAsynth_Ia_anticodon-bd"/>
</dbReference>
<dbReference type="NCBIfam" id="TIGR00456">
    <property type="entry name" value="argS"/>
    <property type="match status" value="1"/>
</dbReference>
<dbReference type="PANTHER" id="PTHR11956:SF5">
    <property type="entry name" value="ARGININE--TRNA LIGASE, CYTOPLASMIC"/>
    <property type="match status" value="1"/>
</dbReference>
<dbReference type="PANTHER" id="PTHR11956">
    <property type="entry name" value="ARGINYL-TRNA SYNTHETASE"/>
    <property type="match status" value="1"/>
</dbReference>
<dbReference type="Pfam" id="PF03485">
    <property type="entry name" value="Arg_tRNA_synt_N"/>
    <property type="match status" value="1"/>
</dbReference>
<dbReference type="Pfam" id="PF05746">
    <property type="entry name" value="DALR_1"/>
    <property type="match status" value="1"/>
</dbReference>
<dbReference type="Pfam" id="PF00750">
    <property type="entry name" value="tRNA-synt_1d"/>
    <property type="match status" value="1"/>
</dbReference>
<dbReference type="PRINTS" id="PR01038">
    <property type="entry name" value="TRNASYNTHARG"/>
</dbReference>
<dbReference type="SMART" id="SM01016">
    <property type="entry name" value="Arg_tRNA_synt_N"/>
    <property type="match status" value="1"/>
</dbReference>
<dbReference type="SMART" id="SM00836">
    <property type="entry name" value="DALR_1"/>
    <property type="match status" value="1"/>
</dbReference>
<dbReference type="SUPFAM" id="SSF47323">
    <property type="entry name" value="Anticodon-binding domain of a subclass of class I aminoacyl-tRNA synthetases"/>
    <property type="match status" value="1"/>
</dbReference>
<dbReference type="SUPFAM" id="SSF55190">
    <property type="entry name" value="Arginyl-tRNA synthetase (ArgRS), N-terminal 'additional' domain"/>
    <property type="match status" value="1"/>
</dbReference>
<dbReference type="SUPFAM" id="SSF52374">
    <property type="entry name" value="Nucleotidylyl transferase"/>
    <property type="match status" value="1"/>
</dbReference>
<dbReference type="PROSITE" id="PS00178">
    <property type="entry name" value="AA_TRNA_LIGASE_I"/>
    <property type="match status" value="1"/>
</dbReference>
<evidence type="ECO:0000255" key="1">
    <source>
        <dbReference type="HAMAP-Rule" id="MF_00123"/>
    </source>
</evidence>
<feature type="chain" id="PRO_1000076212" description="Arginine--tRNA ligase">
    <location>
        <begin position="1"/>
        <end position="556"/>
    </location>
</feature>
<feature type="short sequence motif" description="'HIGH' region">
    <location>
        <begin position="133"/>
        <end position="143"/>
    </location>
</feature>
<keyword id="KW-0030">Aminoacyl-tRNA synthetase</keyword>
<keyword id="KW-0067">ATP-binding</keyword>
<keyword id="KW-0963">Cytoplasm</keyword>
<keyword id="KW-0436">Ligase</keyword>
<keyword id="KW-0547">Nucleotide-binding</keyword>
<keyword id="KW-0648">Protein biosynthesis</keyword>
<accession>A5FQ65</accession>
<reference key="1">
    <citation type="submission" date="2007-05" db="EMBL/GenBank/DDBJ databases">
        <title>Complete sequence of Dehalococcoides sp. BAV1.</title>
        <authorList>
            <consortium name="US DOE Joint Genome Institute"/>
            <person name="Copeland A."/>
            <person name="Lucas S."/>
            <person name="Lapidus A."/>
            <person name="Barry K."/>
            <person name="Detter J.C."/>
            <person name="Glavina del Rio T."/>
            <person name="Hammon N."/>
            <person name="Israni S."/>
            <person name="Pitluck S."/>
            <person name="Lowry S."/>
            <person name="Clum A."/>
            <person name="Schmutz J."/>
            <person name="Larimer F."/>
            <person name="Land M."/>
            <person name="Hauser L."/>
            <person name="Kyrpides N."/>
            <person name="Kim E."/>
            <person name="Ritalahti K.M."/>
            <person name="Loeffler F."/>
            <person name="Richardson P."/>
        </authorList>
    </citation>
    <scope>NUCLEOTIDE SEQUENCE [LARGE SCALE GENOMIC DNA]</scope>
    <source>
        <strain>ATCC BAA-2100 / JCM 16839 / KCTC 5957 / BAV1</strain>
    </source>
</reference>
<gene>
    <name evidence="1" type="primary">argS</name>
    <name type="ordered locus">DehaBAV1_1081</name>
</gene>
<name>SYR_DEHMB</name>
<sequence length="556" mass="61876">MNSILAIKNIVIESLSQAMEKARQEGQIPALSVDISIEHPQKTNYGDYATSLPLRLAKATGKRPMELAQILASYIETGSGISKVSVAPPGFINFTFSKEWLCSLVKTILTEAGSYGNINMGGGSRVQIEFVSANPTGPIHIGHGRGAVLGSTLSNILKAAGYYVEEEFYINDAGSQIDAFKRTLFARYQQALGKDAAVPQDGYHGQYMVDLAAEMVTKYGDKYLQMPADIAQNDLGEIGMARMLCLISDDLKALKVDFDIWFSERSLYSGGQYKTAMDILSGNNYIAERDNATWFSSTLLGDSKDNVIVRSDGTPTYFASDIAYHYNKFIERKFDRVINIWGADHQGHVSRMKAMVSALGINPERLTTLLFQMITLKRGGELVRLSKRTGEIISLREVIEEVGADACRFFFLARSTESQMDFDLELAKKESAENPVYYVQYAHARICSILHLAEEKQLDYSTGDTALLGEEAELELIRKMAELPEIVETVSRTLEPHHLTYYAQELANAFHQFYKDCRVISDNAELTCARLKLVDASRIVLARTLHLMGMTSPESM</sequence>
<proteinExistence type="inferred from homology"/>